<name>QUEE_NITV2</name>
<gene>
    <name evidence="1" type="primary">queE</name>
    <name type="ordered locus">DVU_2658</name>
</gene>
<evidence type="ECO:0000255" key="1">
    <source>
        <dbReference type="HAMAP-Rule" id="MF_00917"/>
    </source>
</evidence>
<evidence type="ECO:0000255" key="2">
    <source>
        <dbReference type="PROSITE-ProRule" id="PRU01266"/>
    </source>
</evidence>
<organism>
    <name type="scientific">Nitratidesulfovibrio vulgaris (strain ATCC 29579 / DSM 644 / CCUG 34227 / NCIMB 8303 / VKM B-1760 / Hildenborough)</name>
    <name type="common">Desulfovibrio vulgaris</name>
    <dbReference type="NCBI Taxonomy" id="882"/>
    <lineage>
        <taxon>Bacteria</taxon>
        <taxon>Pseudomonadati</taxon>
        <taxon>Thermodesulfobacteriota</taxon>
        <taxon>Desulfovibrionia</taxon>
        <taxon>Desulfovibrionales</taxon>
        <taxon>Desulfovibrionaceae</taxon>
        <taxon>Nitratidesulfovibrio</taxon>
    </lineage>
</organism>
<keyword id="KW-0004">4Fe-4S</keyword>
<keyword id="KW-0408">Iron</keyword>
<keyword id="KW-0411">Iron-sulfur</keyword>
<keyword id="KW-0456">Lyase</keyword>
<keyword id="KW-0460">Magnesium</keyword>
<keyword id="KW-0479">Metal-binding</keyword>
<keyword id="KW-0671">Queuosine biosynthesis</keyword>
<keyword id="KW-1185">Reference proteome</keyword>
<keyword id="KW-0949">S-adenosyl-L-methionine</keyword>
<sequence length="216" mass="23535">MTYRVKEIFHTLQGEGMRAGRAAVFCRFSGCNLWTGWAQDRPAAVCPFCDTDFVGTDGPGGGVFEDAATLAAAILAAFPYKTGEGYRPYVVFTGGEPALQLDRPLIDILHAHGCEVAIETNGTVRLPEGIDWVTVSPKAGTRLAVTSGDELKLVWPQQGICPESYESLAFTYLLMQPRDGLGDAGRGDAESEAVRWCLAHPRWRLCLQTHKYLGIP</sequence>
<comment type="function">
    <text evidence="1">Catalyzes the complex heterocyclic radical-mediated conversion of 6-carboxy-5,6,7,8-tetrahydropterin (CPH4) to 7-carboxy-7-deazaguanine (CDG), a step common to the biosynthetic pathways of all 7-deazapurine-containing compounds.</text>
</comment>
<comment type="catalytic activity">
    <reaction evidence="1">
        <text>6-carboxy-5,6,7,8-tetrahydropterin + H(+) = 7-carboxy-7-deazaguanine + NH4(+)</text>
        <dbReference type="Rhea" id="RHEA:27974"/>
        <dbReference type="ChEBI" id="CHEBI:15378"/>
        <dbReference type="ChEBI" id="CHEBI:28938"/>
        <dbReference type="ChEBI" id="CHEBI:61032"/>
        <dbReference type="ChEBI" id="CHEBI:61036"/>
        <dbReference type="EC" id="4.3.99.3"/>
    </reaction>
</comment>
<comment type="cofactor">
    <cofactor evidence="1">
        <name>[4Fe-4S] cluster</name>
        <dbReference type="ChEBI" id="CHEBI:49883"/>
    </cofactor>
    <text evidence="1">Binds 1 [4Fe-4S] cluster. The cluster is coordinated with 3 cysteines and an exchangeable S-adenosyl-L-methionine.</text>
</comment>
<comment type="cofactor">
    <cofactor evidence="1">
        <name>S-adenosyl-L-methionine</name>
        <dbReference type="ChEBI" id="CHEBI:59789"/>
    </cofactor>
    <text evidence="1">Binds 1 S-adenosyl-L-methionine per subunit.</text>
</comment>
<comment type="cofactor">
    <cofactor evidence="1">
        <name>Mg(2+)</name>
        <dbReference type="ChEBI" id="CHEBI:18420"/>
    </cofactor>
</comment>
<comment type="pathway">
    <text evidence="1">Purine metabolism; 7-cyano-7-deazaguanine biosynthesis.</text>
</comment>
<comment type="subunit">
    <text evidence="1">Homodimer.</text>
</comment>
<comment type="similarity">
    <text evidence="1">Belongs to the radical SAM superfamily. 7-carboxy-7-deazaguanine synthase family.</text>
</comment>
<protein>
    <recommendedName>
        <fullName evidence="1">7-carboxy-7-deazaguanine synthase</fullName>
        <shortName evidence="1">CDG synthase</shortName>
        <ecNumber evidence="1">4.3.99.3</ecNumber>
    </recommendedName>
    <alternativeName>
        <fullName evidence="1">Queuosine biosynthesis protein QueE</fullName>
    </alternativeName>
</protein>
<reference key="1">
    <citation type="journal article" date="2004" name="Nat. Biotechnol.">
        <title>The genome sequence of the anaerobic, sulfate-reducing bacterium Desulfovibrio vulgaris Hildenborough.</title>
        <authorList>
            <person name="Heidelberg J.F."/>
            <person name="Seshadri R."/>
            <person name="Haveman S.A."/>
            <person name="Hemme C.L."/>
            <person name="Paulsen I.T."/>
            <person name="Kolonay J.F."/>
            <person name="Eisen J.A."/>
            <person name="Ward N.L."/>
            <person name="Methe B.A."/>
            <person name="Brinkac L.M."/>
            <person name="Daugherty S.C."/>
            <person name="DeBoy R.T."/>
            <person name="Dodson R.J."/>
            <person name="Durkin A.S."/>
            <person name="Madupu R."/>
            <person name="Nelson W.C."/>
            <person name="Sullivan S.A."/>
            <person name="Fouts D.E."/>
            <person name="Haft D.H."/>
            <person name="Selengut J."/>
            <person name="Peterson J.D."/>
            <person name="Davidsen T.M."/>
            <person name="Zafar N."/>
            <person name="Zhou L."/>
            <person name="Radune D."/>
            <person name="Dimitrov G."/>
            <person name="Hance M."/>
            <person name="Tran K."/>
            <person name="Khouri H.M."/>
            <person name="Gill J."/>
            <person name="Utterback T.R."/>
            <person name="Feldblyum T.V."/>
            <person name="Wall J.D."/>
            <person name="Voordouw G."/>
            <person name="Fraser C.M."/>
        </authorList>
    </citation>
    <scope>NUCLEOTIDE SEQUENCE [LARGE SCALE GENOMIC DNA]</scope>
    <source>
        <strain>ATCC 29579 / DSM 644 / CCUG 34227 / NCIMB 8303 / VKM B-1760 / Hildenborough</strain>
    </source>
</reference>
<feature type="chain" id="PRO_0000416203" description="7-carboxy-7-deazaguanine synthase">
    <location>
        <begin position="1"/>
        <end position="216"/>
    </location>
</feature>
<feature type="domain" description="Radical SAM core" evidence="2">
    <location>
        <begin position="18"/>
        <end position="216"/>
    </location>
</feature>
<feature type="binding site" evidence="1">
    <location>
        <begin position="12"/>
        <end position="14"/>
    </location>
    <ligand>
        <name>substrate</name>
    </ligand>
</feature>
<feature type="binding site" evidence="1">
    <location>
        <position position="27"/>
    </location>
    <ligand>
        <name>substrate</name>
    </ligand>
</feature>
<feature type="binding site" evidence="1">
    <location>
        <position position="31"/>
    </location>
    <ligand>
        <name>[4Fe-4S] cluster</name>
        <dbReference type="ChEBI" id="CHEBI:49883"/>
        <note>4Fe-4S-S-AdoMet</note>
    </ligand>
</feature>
<feature type="binding site" evidence="1">
    <location>
        <position position="46"/>
    </location>
    <ligand>
        <name>[4Fe-4S] cluster</name>
        <dbReference type="ChEBI" id="CHEBI:49883"/>
        <note>4Fe-4S-S-AdoMet</note>
    </ligand>
</feature>
<feature type="binding site" evidence="1">
    <location>
        <position position="49"/>
    </location>
    <ligand>
        <name>[4Fe-4S] cluster</name>
        <dbReference type="ChEBI" id="CHEBI:49883"/>
        <note>4Fe-4S-S-AdoMet</note>
    </ligand>
</feature>
<feature type="binding site" evidence="1">
    <location>
        <position position="51"/>
    </location>
    <ligand>
        <name>Mg(2+)</name>
        <dbReference type="ChEBI" id="CHEBI:18420"/>
    </ligand>
</feature>
<feature type="binding site" evidence="1">
    <location>
        <position position="93"/>
    </location>
    <ligand>
        <name>substrate</name>
    </ligand>
</feature>
<feature type="binding site" evidence="1">
    <location>
        <position position="95"/>
    </location>
    <ligand>
        <name>S-adenosyl-L-methionine</name>
        <dbReference type="ChEBI" id="CHEBI:59789"/>
    </ligand>
</feature>
<feature type="binding site" evidence="1">
    <location>
        <begin position="136"/>
        <end position="138"/>
    </location>
    <ligand>
        <name>S-adenosyl-L-methionine</name>
        <dbReference type="ChEBI" id="CHEBI:59789"/>
    </ligand>
</feature>
<feature type="binding site" evidence="1">
    <location>
        <begin position="176"/>
        <end position="179"/>
    </location>
    <ligand>
        <name>S-adenosyl-L-methionine</name>
        <dbReference type="ChEBI" id="CHEBI:59789"/>
    </ligand>
</feature>
<feature type="binding site" evidence="1">
    <location>
        <position position="216"/>
    </location>
    <ligand>
        <name>substrate</name>
    </ligand>
</feature>
<dbReference type="EC" id="4.3.99.3" evidence="1"/>
<dbReference type="EMBL" id="AE017285">
    <property type="protein sequence ID" value="AAS97130.1"/>
    <property type="molecule type" value="Genomic_DNA"/>
</dbReference>
<dbReference type="RefSeq" id="WP_010939927.1">
    <property type="nucleotide sequence ID" value="NC_002937.3"/>
</dbReference>
<dbReference type="RefSeq" id="YP_011870.1">
    <property type="nucleotide sequence ID" value="NC_002937.3"/>
</dbReference>
<dbReference type="SMR" id="Q728E5"/>
<dbReference type="STRING" id="882.DVU_2658"/>
<dbReference type="PaxDb" id="882-DVU_2658"/>
<dbReference type="EnsemblBacteria" id="AAS97130">
    <property type="protein sequence ID" value="AAS97130"/>
    <property type="gene ID" value="DVU_2658"/>
</dbReference>
<dbReference type="KEGG" id="dvu:DVU_2658"/>
<dbReference type="PATRIC" id="fig|882.5.peg.2402"/>
<dbReference type="eggNOG" id="COG0602">
    <property type="taxonomic scope" value="Bacteria"/>
</dbReference>
<dbReference type="HOGENOM" id="CLU_066739_0_1_7"/>
<dbReference type="OrthoDB" id="9792276at2"/>
<dbReference type="PhylomeDB" id="Q728E5"/>
<dbReference type="UniPathway" id="UPA00391"/>
<dbReference type="Proteomes" id="UP000002194">
    <property type="component" value="Chromosome"/>
</dbReference>
<dbReference type="GO" id="GO:0051539">
    <property type="term" value="F:4 iron, 4 sulfur cluster binding"/>
    <property type="evidence" value="ECO:0007669"/>
    <property type="project" value="UniProtKB-UniRule"/>
</dbReference>
<dbReference type="GO" id="GO:0016840">
    <property type="term" value="F:carbon-nitrogen lyase activity"/>
    <property type="evidence" value="ECO:0007669"/>
    <property type="project" value="UniProtKB-UniRule"/>
</dbReference>
<dbReference type="GO" id="GO:0000287">
    <property type="term" value="F:magnesium ion binding"/>
    <property type="evidence" value="ECO:0007669"/>
    <property type="project" value="UniProtKB-UniRule"/>
</dbReference>
<dbReference type="GO" id="GO:1904047">
    <property type="term" value="F:S-adenosyl-L-methionine binding"/>
    <property type="evidence" value="ECO:0007669"/>
    <property type="project" value="UniProtKB-UniRule"/>
</dbReference>
<dbReference type="GO" id="GO:0008616">
    <property type="term" value="P:queuosine biosynthetic process"/>
    <property type="evidence" value="ECO:0007669"/>
    <property type="project" value="UniProtKB-UniRule"/>
</dbReference>
<dbReference type="Gene3D" id="3.20.20.70">
    <property type="entry name" value="Aldolase class I"/>
    <property type="match status" value="1"/>
</dbReference>
<dbReference type="HAMAP" id="MF_00917">
    <property type="entry name" value="QueE"/>
    <property type="match status" value="1"/>
</dbReference>
<dbReference type="InterPro" id="IPR024924">
    <property type="entry name" value="7-CO-7-deazaguanine_synth-like"/>
</dbReference>
<dbReference type="InterPro" id="IPR013785">
    <property type="entry name" value="Aldolase_TIM"/>
</dbReference>
<dbReference type="InterPro" id="IPR030977">
    <property type="entry name" value="QueE_Cx14CxxC"/>
</dbReference>
<dbReference type="InterPro" id="IPR007197">
    <property type="entry name" value="rSAM"/>
</dbReference>
<dbReference type="NCBIfam" id="TIGR04508">
    <property type="entry name" value="queE_Cx14CxxC"/>
    <property type="match status" value="1"/>
</dbReference>
<dbReference type="PANTHER" id="PTHR42836">
    <property type="entry name" value="7-CARBOXY-7-DEAZAGUANINE SYNTHASE"/>
    <property type="match status" value="1"/>
</dbReference>
<dbReference type="PANTHER" id="PTHR42836:SF1">
    <property type="entry name" value="7-CARBOXY-7-DEAZAGUANINE SYNTHASE"/>
    <property type="match status" value="1"/>
</dbReference>
<dbReference type="PIRSF" id="PIRSF000370">
    <property type="entry name" value="QueE"/>
    <property type="match status" value="1"/>
</dbReference>
<dbReference type="SFLD" id="SFLDF00376">
    <property type="entry name" value="7-carboxy-7-deazaguanine_synth"/>
    <property type="match status" value="1"/>
</dbReference>
<dbReference type="SFLD" id="SFLDS00029">
    <property type="entry name" value="Radical_SAM"/>
    <property type="match status" value="1"/>
</dbReference>
<dbReference type="SUPFAM" id="SSF102114">
    <property type="entry name" value="Radical SAM enzymes"/>
    <property type="match status" value="1"/>
</dbReference>
<dbReference type="PROSITE" id="PS51918">
    <property type="entry name" value="RADICAL_SAM"/>
    <property type="match status" value="1"/>
</dbReference>
<proteinExistence type="inferred from homology"/>
<accession>Q728E5</accession>